<gene>
    <name evidence="1" type="primary">rnt</name>
    <name type="ordered locus">CGSHiEE_01410</name>
</gene>
<name>RNT_HAEIE</name>
<organism>
    <name type="scientific">Haemophilus influenzae (strain PittEE)</name>
    <dbReference type="NCBI Taxonomy" id="374930"/>
    <lineage>
        <taxon>Bacteria</taxon>
        <taxon>Pseudomonadati</taxon>
        <taxon>Pseudomonadota</taxon>
        <taxon>Gammaproteobacteria</taxon>
        <taxon>Pasteurellales</taxon>
        <taxon>Pasteurellaceae</taxon>
        <taxon>Haemophilus</taxon>
    </lineage>
</organism>
<accession>A5UAG1</accession>
<keyword id="KW-0269">Exonuclease</keyword>
<keyword id="KW-0378">Hydrolase</keyword>
<keyword id="KW-0460">Magnesium</keyword>
<keyword id="KW-0479">Metal-binding</keyword>
<keyword id="KW-0540">Nuclease</keyword>
<keyword id="KW-0819">tRNA processing</keyword>
<dbReference type="EC" id="3.1.13.-" evidence="1"/>
<dbReference type="EMBL" id="CP000671">
    <property type="protein sequence ID" value="ABQ97762.1"/>
    <property type="molecule type" value="Genomic_DNA"/>
</dbReference>
<dbReference type="SMR" id="A5UAG1"/>
<dbReference type="KEGG" id="hip:CGSHiEE_01410"/>
<dbReference type="HOGENOM" id="CLU_082724_0_0_6"/>
<dbReference type="GO" id="GO:0005829">
    <property type="term" value="C:cytosol"/>
    <property type="evidence" value="ECO:0007669"/>
    <property type="project" value="TreeGrafter"/>
</dbReference>
<dbReference type="GO" id="GO:0008408">
    <property type="term" value="F:3'-5' exonuclease activity"/>
    <property type="evidence" value="ECO:0007669"/>
    <property type="project" value="TreeGrafter"/>
</dbReference>
<dbReference type="GO" id="GO:0000287">
    <property type="term" value="F:magnesium ion binding"/>
    <property type="evidence" value="ECO:0007669"/>
    <property type="project" value="UniProtKB-UniRule"/>
</dbReference>
<dbReference type="GO" id="GO:0003676">
    <property type="term" value="F:nucleic acid binding"/>
    <property type="evidence" value="ECO:0007669"/>
    <property type="project" value="InterPro"/>
</dbReference>
<dbReference type="GO" id="GO:0016896">
    <property type="term" value="F:RNA exonuclease activity, producing 5'-phosphomonoesters"/>
    <property type="evidence" value="ECO:0007669"/>
    <property type="project" value="UniProtKB-UniRule"/>
</dbReference>
<dbReference type="GO" id="GO:0045004">
    <property type="term" value="P:DNA replication proofreading"/>
    <property type="evidence" value="ECO:0007669"/>
    <property type="project" value="TreeGrafter"/>
</dbReference>
<dbReference type="GO" id="GO:0008033">
    <property type="term" value="P:tRNA processing"/>
    <property type="evidence" value="ECO:0007669"/>
    <property type="project" value="UniProtKB-KW"/>
</dbReference>
<dbReference type="CDD" id="cd06134">
    <property type="entry name" value="RNaseT"/>
    <property type="match status" value="1"/>
</dbReference>
<dbReference type="FunFam" id="3.30.420.10:FF:000009">
    <property type="entry name" value="Ribonuclease T"/>
    <property type="match status" value="1"/>
</dbReference>
<dbReference type="Gene3D" id="3.30.420.10">
    <property type="entry name" value="Ribonuclease H-like superfamily/Ribonuclease H"/>
    <property type="match status" value="1"/>
</dbReference>
<dbReference type="HAMAP" id="MF_00157">
    <property type="entry name" value="RNase_T"/>
    <property type="match status" value="1"/>
</dbReference>
<dbReference type="InterPro" id="IPR013520">
    <property type="entry name" value="Exonuclease_RNaseT/DNA_pol3"/>
</dbReference>
<dbReference type="InterPro" id="IPR005987">
    <property type="entry name" value="RNase_T"/>
</dbReference>
<dbReference type="InterPro" id="IPR012337">
    <property type="entry name" value="RNaseH-like_sf"/>
</dbReference>
<dbReference type="InterPro" id="IPR036397">
    <property type="entry name" value="RNaseH_sf"/>
</dbReference>
<dbReference type="NCBIfam" id="TIGR01298">
    <property type="entry name" value="RNaseT"/>
    <property type="match status" value="1"/>
</dbReference>
<dbReference type="PANTHER" id="PTHR30231">
    <property type="entry name" value="DNA POLYMERASE III SUBUNIT EPSILON"/>
    <property type="match status" value="1"/>
</dbReference>
<dbReference type="PANTHER" id="PTHR30231:SF2">
    <property type="entry name" value="RIBONUCLEASE T"/>
    <property type="match status" value="1"/>
</dbReference>
<dbReference type="Pfam" id="PF00929">
    <property type="entry name" value="RNase_T"/>
    <property type="match status" value="1"/>
</dbReference>
<dbReference type="SMART" id="SM00479">
    <property type="entry name" value="EXOIII"/>
    <property type="match status" value="1"/>
</dbReference>
<dbReference type="SUPFAM" id="SSF53098">
    <property type="entry name" value="Ribonuclease H-like"/>
    <property type="match status" value="1"/>
</dbReference>
<reference key="1">
    <citation type="journal article" date="2007" name="Genome Biol.">
        <title>Characterization and modeling of the Haemophilus influenzae core and supragenomes based on the complete genomic sequences of Rd and 12 clinical nontypeable strains.</title>
        <authorList>
            <person name="Hogg J.S."/>
            <person name="Hu F.Z."/>
            <person name="Janto B."/>
            <person name="Boissy R."/>
            <person name="Hayes J."/>
            <person name="Keefe R."/>
            <person name="Post J.C."/>
            <person name="Ehrlich G.D."/>
        </authorList>
    </citation>
    <scope>NUCLEOTIDE SEQUENCE [LARGE SCALE GENOMIC DNA]</scope>
    <source>
        <strain>PittEE</strain>
    </source>
</reference>
<sequence length="229" mass="25502">MSDSQEIPYHNQLKNRFRGYFPVIIDVETAGFDAKKDALLELAAITLKMDENGYLHPDQKCHFHIEPFEGANINPESLKFNGIDIHNPLRGAVSELDAITGLFQMIRRGQKDADCQRSIIVAHNAAFDQSFVMAAAERTGVKRNPFHPFGMFDTASLAGLMFGQTVLVKACLAAKIPFDGKQAHSALYDTERTAELFCYMVNHLKDLGGFPHISQIDETENTAENQTAL</sequence>
<feature type="chain" id="PRO_1000011396" description="Ribonuclease T">
    <location>
        <begin position="1"/>
        <end position="229"/>
    </location>
</feature>
<feature type="domain" description="Exonuclease" evidence="1">
    <location>
        <begin position="23"/>
        <end position="197"/>
    </location>
</feature>
<feature type="active site" description="Proton donor/acceptor" evidence="1">
    <location>
        <position position="184"/>
    </location>
</feature>
<feature type="binding site" evidence="1">
    <location>
        <position position="26"/>
    </location>
    <ligand>
        <name>Mg(2+)</name>
        <dbReference type="ChEBI" id="CHEBI:18420"/>
        <label>1</label>
        <note>catalytic</note>
    </ligand>
</feature>
<feature type="binding site" evidence="1">
    <location>
        <position position="26"/>
    </location>
    <ligand>
        <name>Mg(2+)</name>
        <dbReference type="ChEBI" id="CHEBI:18420"/>
        <label>2</label>
        <note>catalytic</note>
    </ligand>
</feature>
<feature type="binding site" evidence="1">
    <location>
        <position position="28"/>
    </location>
    <ligand>
        <name>Mg(2+)</name>
        <dbReference type="ChEBI" id="CHEBI:18420"/>
        <label>2</label>
        <note>catalytic</note>
    </ligand>
</feature>
<feature type="binding site" evidence="1">
    <location>
        <position position="184"/>
    </location>
    <ligand>
        <name>Mg(2+)</name>
        <dbReference type="ChEBI" id="CHEBI:18420"/>
        <label>2</label>
        <note>catalytic</note>
    </ligand>
</feature>
<feature type="binding site" evidence="1">
    <location>
        <position position="189"/>
    </location>
    <ligand>
        <name>Mg(2+)</name>
        <dbReference type="ChEBI" id="CHEBI:18420"/>
        <label>2</label>
        <note>catalytic</note>
    </ligand>
</feature>
<feature type="site" description="Important for substrate binding and specificity" evidence="1">
    <location>
        <position position="32"/>
    </location>
</feature>
<feature type="site" description="Important for substrate binding and specificity" evidence="1">
    <location>
        <position position="80"/>
    </location>
</feature>
<feature type="site" description="Important for substrate binding and specificity" evidence="1">
    <location>
        <position position="127"/>
    </location>
</feature>
<feature type="site" description="Important for substrate binding and specificity" evidence="1">
    <location>
        <position position="149"/>
    </location>
</feature>
<evidence type="ECO:0000255" key="1">
    <source>
        <dbReference type="HAMAP-Rule" id="MF_00157"/>
    </source>
</evidence>
<proteinExistence type="inferred from homology"/>
<comment type="function">
    <text evidence="1">Trims short 3' overhangs of a variety of RNA species, leaving a one or two nucleotide 3' overhang. Responsible for the end-turnover of tRNA: specifically removes the terminal AMP residue from uncharged tRNA (tRNA-C-C-A). Also appears to be involved in tRNA biosynthesis.</text>
</comment>
<comment type="cofactor">
    <cofactor evidence="1">
        <name>Mg(2+)</name>
        <dbReference type="ChEBI" id="CHEBI:18420"/>
    </cofactor>
    <text evidence="1">Binds two Mg(2+) per subunit. The active form of the enzyme binds two Mg(2+) ions in its active site. The first Mg(2+) forms only one salt bridge with the protein.</text>
</comment>
<comment type="subunit">
    <text evidence="1">Homodimer.</text>
</comment>
<comment type="similarity">
    <text evidence="1">Belongs to the RNase T family.</text>
</comment>
<protein>
    <recommendedName>
        <fullName evidence="1">Ribonuclease T</fullName>
        <ecNumber evidence="1">3.1.13.-</ecNumber>
    </recommendedName>
    <alternativeName>
        <fullName evidence="1">Exoribonuclease T</fullName>
        <shortName evidence="1">RNase T</shortName>
    </alternativeName>
</protein>